<gene>
    <name evidence="1" type="primary">Pcnx1</name>
    <name type="synonym">Kiaa0805</name>
    <name type="synonym">Pcnx</name>
    <name type="synonym">Pcnxl1</name>
</gene>
<evidence type="ECO:0000250" key="1">
    <source>
        <dbReference type="UniProtKB" id="Q96RV3"/>
    </source>
</evidence>
<evidence type="ECO:0000255" key="2"/>
<evidence type="ECO:0000256" key="3">
    <source>
        <dbReference type="SAM" id="MobiDB-lite"/>
    </source>
</evidence>
<evidence type="ECO:0000303" key="4">
    <source>
    </source>
</evidence>
<evidence type="ECO:0000305" key="5"/>
<sequence>MGSQTLQILRQGVWAALSGGWYYDPHQATFVNALHLYLWLFLLGLPFTLYMALPSSMIIVAVYCPVVAAVFIILKMVNYRLHRALDAGEIVDRSAKEFTDQRAKAEQGNCSTRRKDSNGPSDPGGGIEMSEFIREATPPVGCSSRNSYAGLDPSNQIGSGSSRLGTAATIKGDTDTAKTSDDISLSLGQSSSLCKEGSEEQDLATDRKLFRLVSNDSFISIQPSLSSCGQDLPRDFSDKVSLPSHSQHHRVDQSLCSACDTEVASLVPLHSHSYRKEHRPRGVPRTSSSAVAFPDASLSGLPLYQQQQRRGLDPVTELDSSKPHSGTRESSAGKSCPPAQSQPAADRRKSSSQPPTKCGKSRALNAEKSVDSLRSLSTRSSGSTESYCSGTDRDTNSTLSSYKSEQTSSTHIESILSEHEESPKVGDKSARKRECGADSVEERSHRADDRRTSSDKTAPEGNTPAGPPEAPDAQASEEMADQAAPSSSASEDANKNPHANEFTVPGDRPPEQSAESKEEQSEKPSLATDSRVCKDDGGKQKEGDVRPKSSSLIHRTTSAHKPGRRRTGKKRASSFDSSRHRDYVSFRGVSGTKPHSAVFGHDEDSSDQSDLSRAPSIHSAHQFSSDSSSSATSHSCQSPEGKYGALKTKHGHRDRGTDSDHTHRAHPGPEGTTKKRASRRTSSTSSAKTRARVLSLDSGTVACLNDSNRLLAPDSMKPLTTSKSDLEAKEGEVLDELSLLGRASQLETVTRSRNSLPSQVAFPEGEEQDAATGAAQASEEAVAFRRERSTFRRQAVRRRHNAGSNPTPPTLLIGSPLSLQDGQQGQQSTAQVKVQSRPPSQAAVLSASASLLVRKGSVHLEASHDHASAVGGSSLHDELGKFSSTLYETGGCDMSLVNFEPAARRASNICDTDSHVSSSTSVRFYPHDMLSLPQIRLNRLLTIDTDLLEQQDIDLSPDLAATYGPTEEAAQKVKHYYRFWVLPQLWIGINFDRLTLLALFDRNREILENILAVVLAILVAFLGSILLIQGFFRDIWVFQFCLVIASCQYSLLKSVQPDSSSPRHGHNRIIAYSRPVYFCLCCGLIWLLDYGSRNLTTSKFKLYGVTFTNPLVLLSARDLVIVFTLCFPIVFFIGLLPQVNTFVMYLCEQLDIHIFGGNATTSLLAALYSFLCSIVAVALLYGLCYGALRDSWDGQHVPVLFSVFCGLLVAVSYHLSRQSSDPSVLFSLMQSKIFPKADEKNPEDPLSEVKDPLPEKLSNSVSERLQSDLVVCVIIGVLYFAIHVSTVFTALQPALKYVLYALVGVVGLVTHYVLPQVRKQLPWHCFSRPLLRTAEHSQYEVRNAATMMWFEKLHVWLLFVEKNIIYPLIVLNELSSSAETIASPKKLDTELGALMITIAGLKLLRSSFSSPTYQYITVIFTVLFFKFDYEAFSETMLLDLFFMSILFSKLWELLYKLQFVYTYVAPWQITWGSAFHAFAQPFAVPHSAMLFVQAIVSAFFSTPLNPFLGSAIFITSYVRPVKFWERDYNTKRVDHSNTRLASQLDRNPGSDDNNLNSIFYEHLTRSLQHSLCGDLLLGRWGNYSTGDCFILASDYLNALVHLIEIGNGLVTFQLRGLEFRGTYCQQREVEAITEGVEEDEGFCCCEPGHVPHVLSFNAAFGQRWLAWEVVVTKYILEGYSITDNSAASMLQVFDLRRVLTTYYVKGIIYYVTTSSKLEEWLANETMQEGLRLCADRNYVDVDPTFNPNIDEDYDHRLAGISRESFCVIYLSWIEYCSSRRAKPLDVDKDSSLVTLCYGLCVLGRRALGTASHHMSSNLESFLYGLHALFKGDFRISSVRDEWIFADMELLRKVVVPGIRMSIKLHQDHFTSPDEYDDPTVLYEAIVSHEKNLVIAHEGDPAWRSAVLANSPSLLALRHVMDDGTNEYKIIMLNRRYLSFRVIKVNKECVRGLWAGQQQELVFLRNRNPERGSIQNAKQALRNMINSSCDQPIGYPIFVSPLTTSYSDSHDQLKEILGGPISLGNIRNFIVSTWHRLRKGCGAGCNSGGNIEDSDTGGGTSCPGNSAVTASDPHNNVSQGSTGHPGQGAGSGLHPPTTSYPPTLGTSHSAHSVQSSLVRQSPARASMASQSSYCYSSRHSSLRMSTTGFVPCRRSSTSQISLRNLPSSIQSRLSMVNQMEAASQGGMGCVQHGLPSSSSSSQSIPACKHHTLVAFLGAEGGQGSATEAQPGNTSSPANISHARKGEVIYRVQIVDLSQILEGINVSKRKELHWPDEGIRLKAGRNSWKDWSPQEGMEGHVVHRWVPCSRDPSTRSHIDKTVLLVQIDDKYVTIIETGVLELGAEV</sequence>
<protein>
    <recommendedName>
        <fullName>Pecanex-like protein 1</fullName>
    </recommendedName>
    <alternativeName>
        <fullName evidence="1">Pecanex homolog protein 1</fullName>
    </alternativeName>
</protein>
<organism>
    <name type="scientific">Mus musculus</name>
    <name type="common">Mouse</name>
    <dbReference type="NCBI Taxonomy" id="10090"/>
    <lineage>
        <taxon>Eukaryota</taxon>
        <taxon>Metazoa</taxon>
        <taxon>Chordata</taxon>
        <taxon>Craniata</taxon>
        <taxon>Vertebrata</taxon>
        <taxon>Euteleostomi</taxon>
        <taxon>Mammalia</taxon>
        <taxon>Eutheria</taxon>
        <taxon>Euarchontoglires</taxon>
        <taxon>Glires</taxon>
        <taxon>Rodentia</taxon>
        <taxon>Myomorpha</taxon>
        <taxon>Muroidea</taxon>
        <taxon>Muridae</taxon>
        <taxon>Murinae</taxon>
        <taxon>Mus</taxon>
        <taxon>Mus</taxon>
    </lineage>
</organism>
<accession>Q9QYC1</accession>
<accession>Q6ZQ41</accession>
<accession>Q9CUU7</accession>
<reference key="1">
    <citation type="journal article" date="2009" name="PLoS Biol.">
        <title>Lineage-specific biology revealed by a finished genome assembly of the mouse.</title>
        <authorList>
            <person name="Church D.M."/>
            <person name="Goodstadt L."/>
            <person name="Hillier L.W."/>
            <person name="Zody M.C."/>
            <person name="Goldstein S."/>
            <person name="She X."/>
            <person name="Bult C.J."/>
            <person name="Agarwala R."/>
            <person name="Cherry J.L."/>
            <person name="DiCuccio M."/>
            <person name="Hlavina W."/>
            <person name="Kapustin Y."/>
            <person name="Meric P."/>
            <person name="Maglott D."/>
            <person name="Birtle Z."/>
            <person name="Marques A.C."/>
            <person name="Graves T."/>
            <person name="Zhou S."/>
            <person name="Teague B."/>
            <person name="Potamousis K."/>
            <person name="Churas C."/>
            <person name="Place M."/>
            <person name="Herschleb J."/>
            <person name="Runnheim R."/>
            <person name="Forrest D."/>
            <person name="Amos-Landgraf J."/>
            <person name="Schwartz D.C."/>
            <person name="Cheng Z."/>
            <person name="Lindblad-Toh K."/>
            <person name="Eichler E.E."/>
            <person name="Ponting C.P."/>
        </authorList>
    </citation>
    <scope>NUCLEOTIDE SEQUENCE [LARGE SCALE GENOMIC DNA]</scope>
    <source>
        <strain>C57BL/6J</strain>
    </source>
</reference>
<reference key="2">
    <citation type="journal article" date="2003" name="DNA Res.">
        <title>Prediction of the coding sequences of mouse homologues of KIAA gene: III. The complete nucleotide sequences of 500 mouse KIAA-homologous cDNAs identified by screening of terminal sequences of cDNA clones randomly sampled from size-fractionated libraries.</title>
        <authorList>
            <person name="Okazaki N."/>
            <person name="Kikuno R."/>
            <person name="Ohara R."/>
            <person name="Inamoto S."/>
            <person name="Koseki H."/>
            <person name="Hiraoka S."/>
            <person name="Saga Y."/>
            <person name="Nagase T."/>
            <person name="Ohara O."/>
            <person name="Koga H."/>
        </authorList>
    </citation>
    <scope>NUCLEOTIDE SEQUENCE [LARGE SCALE MRNA] OF 594-2344 (ISOFORM 2)</scope>
    <source>
        <tissue>Embryonic tail</tissue>
    </source>
</reference>
<reference key="3">
    <citation type="submission" date="1998-10" db="EMBL/GenBank/DDBJ databases">
        <title>Cloning of a mouse homolog of the Drosophila pecanex gene.</title>
        <authorList>
            <person name="Roux A.-F."/>
        </authorList>
    </citation>
    <scope>NUCLEOTIDE SEQUENCE [MRNA] OF 880-2344 (ISOFORM 1)</scope>
</reference>
<reference key="4">
    <citation type="journal article" date="2005" name="Science">
        <title>The transcriptional landscape of the mammalian genome.</title>
        <authorList>
            <person name="Carninci P."/>
            <person name="Kasukawa T."/>
            <person name="Katayama S."/>
            <person name="Gough J."/>
            <person name="Frith M.C."/>
            <person name="Maeda N."/>
            <person name="Oyama R."/>
            <person name="Ravasi T."/>
            <person name="Lenhard B."/>
            <person name="Wells C."/>
            <person name="Kodzius R."/>
            <person name="Shimokawa K."/>
            <person name="Bajic V.B."/>
            <person name="Brenner S.E."/>
            <person name="Batalov S."/>
            <person name="Forrest A.R."/>
            <person name="Zavolan M."/>
            <person name="Davis M.J."/>
            <person name="Wilming L.G."/>
            <person name="Aidinis V."/>
            <person name="Allen J.E."/>
            <person name="Ambesi-Impiombato A."/>
            <person name="Apweiler R."/>
            <person name="Aturaliya R.N."/>
            <person name="Bailey T.L."/>
            <person name="Bansal M."/>
            <person name="Baxter L."/>
            <person name="Beisel K.W."/>
            <person name="Bersano T."/>
            <person name="Bono H."/>
            <person name="Chalk A.M."/>
            <person name="Chiu K.P."/>
            <person name="Choudhary V."/>
            <person name="Christoffels A."/>
            <person name="Clutterbuck D.R."/>
            <person name="Crowe M.L."/>
            <person name="Dalla E."/>
            <person name="Dalrymple B.P."/>
            <person name="de Bono B."/>
            <person name="Della Gatta G."/>
            <person name="di Bernardo D."/>
            <person name="Down T."/>
            <person name="Engstrom P."/>
            <person name="Fagiolini M."/>
            <person name="Faulkner G."/>
            <person name="Fletcher C.F."/>
            <person name="Fukushima T."/>
            <person name="Furuno M."/>
            <person name="Futaki S."/>
            <person name="Gariboldi M."/>
            <person name="Georgii-Hemming P."/>
            <person name="Gingeras T.R."/>
            <person name="Gojobori T."/>
            <person name="Green R.E."/>
            <person name="Gustincich S."/>
            <person name="Harbers M."/>
            <person name="Hayashi Y."/>
            <person name="Hensch T.K."/>
            <person name="Hirokawa N."/>
            <person name="Hill D."/>
            <person name="Huminiecki L."/>
            <person name="Iacono M."/>
            <person name="Ikeo K."/>
            <person name="Iwama A."/>
            <person name="Ishikawa T."/>
            <person name="Jakt M."/>
            <person name="Kanapin A."/>
            <person name="Katoh M."/>
            <person name="Kawasawa Y."/>
            <person name="Kelso J."/>
            <person name="Kitamura H."/>
            <person name="Kitano H."/>
            <person name="Kollias G."/>
            <person name="Krishnan S.P."/>
            <person name="Kruger A."/>
            <person name="Kummerfeld S.K."/>
            <person name="Kurochkin I.V."/>
            <person name="Lareau L.F."/>
            <person name="Lazarevic D."/>
            <person name="Lipovich L."/>
            <person name="Liu J."/>
            <person name="Liuni S."/>
            <person name="McWilliam S."/>
            <person name="Madan Babu M."/>
            <person name="Madera M."/>
            <person name="Marchionni L."/>
            <person name="Matsuda H."/>
            <person name="Matsuzawa S."/>
            <person name="Miki H."/>
            <person name="Mignone F."/>
            <person name="Miyake S."/>
            <person name="Morris K."/>
            <person name="Mottagui-Tabar S."/>
            <person name="Mulder N."/>
            <person name="Nakano N."/>
            <person name="Nakauchi H."/>
            <person name="Ng P."/>
            <person name="Nilsson R."/>
            <person name="Nishiguchi S."/>
            <person name="Nishikawa S."/>
            <person name="Nori F."/>
            <person name="Ohara O."/>
            <person name="Okazaki Y."/>
            <person name="Orlando V."/>
            <person name="Pang K.C."/>
            <person name="Pavan W.J."/>
            <person name="Pavesi G."/>
            <person name="Pesole G."/>
            <person name="Petrovsky N."/>
            <person name="Piazza S."/>
            <person name="Reed J."/>
            <person name="Reid J.F."/>
            <person name="Ring B.Z."/>
            <person name="Ringwald M."/>
            <person name="Rost B."/>
            <person name="Ruan Y."/>
            <person name="Salzberg S.L."/>
            <person name="Sandelin A."/>
            <person name="Schneider C."/>
            <person name="Schoenbach C."/>
            <person name="Sekiguchi K."/>
            <person name="Semple C.A."/>
            <person name="Seno S."/>
            <person name="Sessa L."/>
            <person name="Sheng Y."/>
            <person name="Shibata Y."/>
            <person name="Shimada H."/>
            <person name="Shimada K."/>
            <person name="Silva D."/>
            <person name="Sinclair B."/>
            <person name="Sperling S."/>
            <person name="Stupka E."/>
            <person name="Sugiura K."/>
            <person name="Sultana R."/>
            <person name="Takenaka Y."/>
            <person name="Taki K."/>
            <person name="Tammoja K."/>
            <person name="Tan S.L."/>
            <person name="Tang S."/>
            <person name="Taylor M.S."/>
            <person name="Tegner J."/>
            <person name="Teichmann S.A."/>
            <person name="Ueda H.R."/>
            <person name="van Nimwegen E."/>
            <person name="Verardo R."/>
            <person name="Wei C.L."/>
            <person name="Yagi K."/>
            <person name="Yamanishi H."/>
            <person name="Zabarovsky E."/>
            <person name="Zhu S."/>
            <person name="Zimmer A."/>
            <person name="Hide W."/>
            <person name="Bult C."/>
            <person name="Grimmond S.M."/>
            <person name="Teasdale R.D."/>
            <person name="Liu E.T."/>
            <person name="Brusic V."/>
            <person name="Quackenbush J."/>
            <person name="Wahlestedt C."/>
            <person name="Mattick J.S."/>
            <person name="Hume D.A."/>
            <person name="Kai C."/>
            <person name="Sasaki D."/>
            <person name="Tomaru Y."/>
            <person name="Fukuda S."/>
            <person name="Kanamori-Katayama M."/>
            <person name="Suzuki M."/>
            <person name="Aoki J."/>
            <person name="Arakawa T."/>
            <person name="Iida J."/>
            <person name="Imamura K."/>
            <person name="Itoh M."/>
            <person name="Kato T."/>
            <person name="Kawaji H."/>
            <person name="Kawagashira N."/>
            <person name="Kawashima T."/>
            <person name="Kojima M."/>
            <person name="Kondo S."/>
            <person name="Konno H."/>
            <person name="Nakano K."/>
            <person name="Ninomiya N."/>
            <person name="Nishio T."/>
            <person name="Okada M."/>
            <person name="Plessy C."/>
            <person name="Shibata K."/>
            <person name="Shiraki T."/>
            <person name="Suzuki S."/>
            <person name="Tagami M."/>
            <person name="Waki K."/>
            <person name="Watahiki A."/>
            <person name="Okamura-Oho Y."/>
            <person name="Suzuki H."/>
            <person name="Kawai J."/>
            <person name="Hayashizaki Y."/>
        </authorList>
    </citation>
    <scope>NUCLEOTIDE SEQUENCE [LARGE SCALE MRNA] OF 1658-2344 (ISOFORM 1)</scope>
    <source>
        <strain>C57BL/6J</strain>
        <tissue>Brain</tissue>
    </source>
</reference>
<reference key="5">
    <citation type="journal article" date="2010" name="Cell">
        <title>A tissue-specific atlas of mouse protein phosphorylation and expression.</title>
        <authorList>
            <person name="Huttlin E.L."/>
            <person name="Jedrychowski M.P."/>
            <person name="Elias J.E."/>
            <person name="Goswami T."/>
            <person name="Rad R."/>
            <person name="Beausoleil S.A."/>
            <person name="Villen J."/>
            <person name="Haas W."/>
            <person name="Sowa M.E."/>
            <person name="Gygi S.P."/>
        </authorList>
    </citation>
    <scope>IDENTIFICATION BY MASS SPECTROMETRY [LARGE SCALE ANALYSIS]</scope>
    <source>
        <tissue>Brain</tissue>
        <tissue>Heart</tissue>
    </source>
</reference>
<name>PCX1_MOUSE</name>
<feature type="chain" id="PRO_0000215794" description="Pecanex-like protein 1">
    <location>
        <begin position="1"/>
        <end position="2344"/>
    </location>
</feature>
<feature type="transmembrane region" description="Helical" evidence="2">
    <location>
        <begin position="33"/>
        <end position="53"/>
    </location>
</feature>
<feature type="transmembrane region" description="Helical" evidence="2">
    <location>
        <begin position="57"/>
        <end position="77"/>
    </location>
</feature>
<feature type="transmembrane region" description="Helical" evidence="2">
    <location>
        <begin position="1010"/>
        <end position="1030"/>
    </location>
</feature>
<feature type="transmembrane region" description="Helical" evidence="2">
    <location>
        <begin position="1035"/>
        <end position="1055"/>
    </location>
</feature>
<feature type="transmembrane region" description="Helical" evidence="2">
    <location>
        <begin position="1069"/>
        <end position="1089"/>
    </location>
</feature>
<feature type="transmembrane region" description="Helical" evidence="2">
    <location>
        <begin position="1119"/>
        <end position="1139"/>
    </location>
</feature>
<feature type="transmembrane region" description="Helical" evidence="2">
    <location>
        <begin position="1163"/>
        <end position="1183"/>
    </location>
</feature>
<feature type="transmembrane region" description="Helical" evidence="2">
    <location>
        <begin position="1196"/>
        <end position="1216"/>
    </location>
</feature>
<feature type="transmembrane region" description="Helical" evidence="2">
    <location>
        <begin position="1269"/>
        <end position="1289"/>
    </location>
</feature>
<feature type="transmembrane region" description="Helical" evidence="2">
    <location>
        <begin position="1297"/>
        <end position="1317"/>
    </location>
</feature>
<feature type="region of interest" description="Disordered" evidence="3">
    <location>
        <begin position="101"/>
        <end position="163"/>
    </location>
</feature>
<feature type="region of interest" description="Disordered" evidence="3">
    <location>
        <begin position="271"/>
        <end position="290"/>
    </location>
</feature>
<feature type="region of interest" description="Disordered" evidence="3">
    <location>
        <begin position="306"/>
        <end position="692"/>
    </location>
</feature>
<feature type="region of interest" description="Disordered" evidence="3">
    <location>
        <begin position="749"/>
        <end position="837"/>
    </location>
</feature>
<feature type="region of interest" description="Disordered" evidence="3">
    <location>
        <begin position="2051"/>
        <end position="2123"/>
    </location>
</feature>
<feature type="compositionally biased region" description="Polar residues" evidence="3">
    <location>
        <begin position="143"/>
        <end position="163"/>
    </location>
</feature>
<feature type="compositionally biased region" description="Basic residues" evidence="3">
    <location>
        <begin position="272"/>
        <end position="282"/>
    </location>
</feature>
<feature type="compositionally biased region" description="Polar residues" evidence="3">
    <location>
        <begin position="328"/>
        <end position="343"/>
    </location>
</feature>
<feature type="compositionally biased region" description="Low complexity" evidence="3">
    <location>
        <begin position="372"/>
        <end position="390"/>
    </location>
</feature>
<feature type="compositionally biased region" description="Polar residues" evidence="3">
    <location>
        <begin position="396"/>
        <end position="406"/>
    </location>
</feature>
<feature type="compositionally biased region" description="Basic and acidic residues" evidence="3">
    <location>
        <begin position="416"/>
        <end position="458"/>
    </location>
</feature>
<feature type="compositionally biased region" description="Basic and acidic residues" evidence="3">
    <location>
        <begin position="508"/>
        <end position="522"/>
    </location>
</feature>
<feature type="compositionally biased region" description="Basic and acidic residues" evidence="3">
    <location>
        <begin position="531"/>
        <end position="547"/>
    </location>
</feature>
<feature type="compositionally biased region" description="Basic residues" evidence="3">
    <location>
        <begin position="557"/>
        <end position="572"/>
    </location>
</feature>
<feature type="compositionally biased region" description="Low complexity" evidence="3">
    <location>
        <begin position="616"/>
        <end position="638"/>
    </location>
</feature>
<feature type="compositionally biased region" description="Polar residues" evidence="3">
    <location>
        <begin position="749"/>
        <end position="758"/>
    </location>
</feature>
<feature type="compositionally biased region" description="Low complexity" evidence="3">
    <location>
        <begin position="770"/>
        <end position="781"/>
    </location>
</feature>
<feature type="compositionally biased region" description="Low complexity" evidence="3">
    <location>
        <begin position="817"/>
        <end position="835"/>
    </location>
</feature>
<feature type="compositionally biased region" description="Polar residues" evidence="3">
    <location>
        <begin position="2061"/>
        <end position="2081"/>
    </location>
</feature>
<feature type="compositionally biased region" description="Polar residues" evidence="3">
    <location>
        <begin position="2095"/>
        <end position="2118"/>
    </location>
</feature>
<feature type="glycosylation site" description="N-linked (GlcNAc...) asparagine" evidence="2">
    <location>
        <position position="1094"/>
    </location>
</feature>
<feature type="glycosylation site" description="N-linked (GlcNAc...) asparagine" evidence="2">
    <location>
        <position position="1158"/>
    </location>
</feature>
<feature type="glycosylation site" description="N-linked (GlcNAc...) asparagine" evidence="2">
    <location>
        <position position="1582"/>
    </location>
</feature>
<feature type="glycosylation site" description="N-linked (GlcNAc...) asparagine" evidence="2">
    <location>
        <position position="1723"/>
    </location>
</feature>
<feature type="glycosylation site" description="N-linked (GlcNAc...) asparagine" evidence="2">
    <location>
        <position position="1985"/>
    </location>
</feature>
<feature type="glycosylation site" description="N-linked (GlcNAc...) asparagine" evidence="2">
    <location>
        <position position="2075"/>
    </location>
</feature>
<feature type="glycosylation site" description="N-linked (GlcNAc...) asparagine" evidence="2">
    <location>
        <position position="2231"/>
    </location>
</feature>
<feature type="glycosylation site" description="N-linked (GlcNAc...) asparagine" evidence="2">
    <location>
        <position position="2237"/>
    </location>
</feature>
<feature type="glycosylation site" description="N-linked (GlcNAc...) asparagine" evidence="2">
    <location>
        <position position="2263"/>
    </location>
</feature>
<feature type="splice variant" id="VSP_022167" description="In isoform 2." evidence="4">
    <location>
        <begin position="854"/>
        <end position="945"/>
    </location>
</feature>
<feature type="sequence conflict" description="In Ref. 3; AAF21809." evidence="5" ref="3">
    <location>
        <begin position="930"/>
        <end position="934"/>
    </location>
</feature>
<feature type="sequence conflict" description="In Ref. 3; AAF21809." evidence="5" ref="3">
    <original>S</original>
    <variation>N</variation>
    <location>
        <position position="1220"/>
    </location>
</feature>
<feature type="sequence conflict" description="In Ref. 3; AAF21809." evidence="5" ref="3">
    <original>L</original>
    <variation>R</variation>
    <location>
        <position position="1457"/>
    </location>
</feature>
<feature type="sequence conflict" description="In Ref. 4; BAB29314." evidence="5" ref="4">
    <original>A</original>
    <variation>T</variation>
    <location>
        <position position="1806"/>
    </location>
</feature>
<feature type="sequence conflict" description="In Ref. 4; BAB29314." evidence="5" ref="4">
    <original>E</original>
    <variation>K</variation>
    <location>
        <position position="1874"/>
    </location>
</feature>
<feature type="sequence conflict" description="In Ref. 4; BAB29314." evidence="5" ref="4">
    <original>D</original>
    <variation>Y</variation>
    <location>
        <position position="1899"/>
    </location>
</feature>
<feature type="sequence conflict" description="In Ref. 3; AAF21809." evidence="5" ref="3">
    <original>K</original>
    <variation>N</variation>
    <location>
        <position position="2318"/>
    </location>
</feature>
<dbReference type="EMBL" id="AC124484">
    <property type="status" value="NOT_ANNOTATED_CDS"/>
    <property type="molecule type" value="Genomic_DNA"/>
</dbReference>
<dbReference type="EMBL" id="AC124595">
    <property type="status" value="NOT_ANNOTATED_CDS"/>
    <property type="molecule type" value="Genomic_DNA"/>
</dbReference>
<dbReference type="EMBL" id="AK129221">
    <property type="protein sequence ID" value="BAC98031.3"/>
    <property type="molecule type" value="mRNA"/>
</dbReference>
<dbReference type="EMBL" id="AF096286">
    <property type="protein sequence ID" value="AAF21809.1"/>
    <property type="status" value="ALT_INIT"/>
    <property type="molecule type" value="mRNA"/>
</dbReference>
<dbReference type="EMBL" id="AK014387">
    <property type="protein sequence ID" value="BAB29314.1"/>
    <property type="molecule type" value="mRNA"/>
</dbReference>
<dbReference type="CCDS" id="CCDS26025.1">
    <molecule id="Q9QYC1-1"/>
</dbReference>
<dbReference type="RefSeq" id="NP_061284.2">
    <molecule id="Q9QYC1-1"/>
    <property type="nucleotide sequence ID" value="NM_018814.3"/>
</dbReference>
<dbReference type="SMR" id="Q9QYC1"/>
<dbReference type="FunCoup" id="Q9QYC1">
    <property type="interactions" value="395"/>
</dbReference>
<dbReference type="STRING" id="10090.ENSMUSP00000021567"/>
<dbReference type="GlyCosmos" id="Q9QYC1">
    <property type="glycosylation" value="9 sites, No reported glycans"/>
</dbReference>
<dbReference type="GlyGen" id="Q9QYC1">
    <property type="glycosylation" value="12 sites, 4 N-linked glycans (4 sites)"/>
</dbReference>
<dbReference type="iPTMnet" id="Q9QYC1"/>
<dbReference type="PhosphoSitePlus" id="Q9QYC1"/>
<dbReference type="SwissPalm" id="Q9QYC1"/>
<dbReference type="PaxDb" id="10090-ENSMUSP00000021567"/>
<dbReference type="PeptideAtlas" id="Q9QYC1"/>
<dbReference type="ProteomicsDB" id="287978">
    <molecule id="Q9QYC1-1"/>
</dbReference>
<dbReference type="ProteomicsDB" id="287979">
    <molecule id="Q9QYC1-2"/>
</dbReference>
<dbReference type="Antibodypedia" id="25184">
    <property type="antibodies" value="74 antibodies from 18 providers"/>
</dbReference>
<dbReference type="DNASU" id="54604"/>
<dbReference type="Ensembl" id="ENSMUST00000021567.6">
    <molecule id="Q9QYC1-1"/>
    <property type="protein sequence ID" value="ENSMUSP00000021567.6"/>
    <property type="gene ID" value="ENSMUSG00000021140.10"/>
</dbReference>
<dbReference type="GeneID" id="54604"/>
<dbReference type="KEGG" id="mmu:54604"/>
<dbReference type="UCSC" id="uc007ocq.1">
    <molecule id="Q9QYC1-1"/>
    <property type="organism name" value="mouse"/>
</dbReference>
<dbReference type="AGR" id="MGI:1891924"/>
<dbReference type="CTD" id="22990"/>
<dbReference type="MGI" id="MGI:1891924">
    <property type="gene designation" value="Pcnx1"/>
</dbReference>
<dbReference type="VEuPathDB" id="HostDB:ENSMUSG00000021140"/>
<dbReference type="eggNOG" id="KOG3604">
    <property type="taxonomic scope" value="Eukaryota"/>
</dbReference>
<dbReference type="GeneTree" id="ENSGT00940000157417"/>
<dbReference type="HOGENOM" id="CLU_000602_0_1_1"/>
<dbReference type="InParanoid" id="Q9QYC1"/>
<dbReference type="OMA" id="ELXDTDS"/>
<dbReference type="OrthoDB" id="10037631at2759"/>
<dbReference type="PhylomeDB" id="Q9QYC1"/>
<dbReference type="TreeFam" id="TF313570"/>
<dbReference type="BioGRID-ORCS" id="54604">
    <property type="hits" value="3 hits in 78 CRISPR screens"/>
</dbReference>
<dbReference type="ChiTaRS" id="Pcnx">
    <property type="organism name" value="mouse"/>
</dbReference>
<dbReference type="PRO" id="PR:Q9QYC1"/>
<dbReference type="Proteomes" id="UP000000589">
    <property type="component" value="Chromosome 12"/>
</dbReference>
<dbReference type="RNAct" id="Q9QYC1">
    <property type="molecule type" value="protein"/>
</dbReference>
<dbReference type="Bgee" id="ENSMUSG00000021140">
    <property type="expression patterns" value="Expressed in cortical plate and 251 other cell types or tissues"/>
</dbReference>
<dbReference type="ExpressionAtlas" id="Q9QYC1">
    <property type="expression patterns" value="baseline and differential"/>
</dbReference>
<dbReference type="GO" id="GO:0016020">
    <property type="term" value="C:membrane"/>
    <property type="evidence" value="ECO:0007669"/>
    <property type="project" value="UniProtKB-SubCell"/>
</dbReference>
<dbReference type="InterPro" id="IPR039797">
    <property type="entry name" value="Pecanex"/>
</dbReference>
<dbReference type="InterPro" id="IPR007735">
    <property type="entry name" value="Pecanex_C"/>
</dbReference>
<dbReference type="PANTHER" id="PTHR12372">
    <property type="entry name" value="PECANEX"/>
    <property type="match status" value="1"/>
</dbReference>
<dbReference type="PANTHER" id="PTHR12372:SF2">
    <property type="entry name" value="PECANEX-LIKE PROTEIN 1"/>
    <property type="match status" value="1"/>
</dbReference>
<dbReference type="Pfam" id="PF05041">
    <property type="entry name" value="Pecanex_C"/>
    <property type="match status" value="1"/>
</dbReference>
<proteinExistence type="evidence at protein level"/>
<keyword id="KW-0025">Alternative splicing</keyword>
<keyword id="KW-0325">Glycoprotein</keyword>
<keyword id="KW-0472">Membrane</keyword>
<keyword id="KW-1185">Reference proteome</keyword>
<keyword id="KW-0812">Transmembrane</keyword>
<keyword id="KW-1133">Transmembrane helix</keyword>
<comment type="subcellular location">
    <subcellularLocation>
        <location evidence="5">Membrane</location>
        <topology evidence="5">Multi-pass membrane protein</topology>
    </subcellularLocation>
</comment>
<comment type="alternative products">
    <event type="alternative splicing"/>
    <isoform>
        <id>Q9QYC1-1</id>
        <name>1</name>
        <sequence type="displayed"/>
    </isoform>
    <isoform>
        <id>Q9QYC1-2</id>
        <name>2</name>
        <sequence type="described" ref="VSP_022167"/>
    </isoform>
</comment>
<comment type="similarity">
    <text evidence="5">Belongs to the pecanex family.</text>
</comment>
<comment type="sequence caution" evidence="5">
    <conflict type="erroneous initiation">
        <sequence resource="EMBL-CDS" id="AAF21809"/>
    </conflict>
</comment>